<gene>
    <name evidence="5" type="primary">ABCG47</name>
    <name evidence="4" type="synonym">PDR19</name>
    <name evidence="6" type="ordered locus">Os09g0333000</name>
    <name type="ordered locus">LOC_Os09g16380</name>
    <name evidence="7" type="ORF">OSJNBa0017I18.31</name>
</gene>
<sequence>MDGGGGETYGCGGGRREGGWAWAAAAADSVFSRSSSSAREDDEEDLRWAALEKLPTYDRARTALLALPPDGELREVNVRRLAADEQRALLERVAGVADDHAGFLCMFKERLDRVGIKLPTIEVRYENLNVEAESYVGSRGFPTIFNTYANIFEGLGNALHITRKKKQKISILHNVSGIVKPHRMTLLLGPPGSGKTSLLMALAGTLPSTVKVSGTITYNGHTMDEFVPQRSAAYVSQHDLHMAELTVRETVSFSAKCQGVGHHYDMLMELLRREKEENIKPDPEIDLYLKQKAEVVTNHILKILGLDICADTIVGNNMVRGISGGQKKRLTTAEMLVTPGRALFMDEILTGLDSSTTFQIVNSIRQTVHILGGTTIIALLQPAPETYELFDEIIILSDGQVVYNGPRDHVLEFFQSIGFKCPERKGVADFLQEVTSRKDQKQYWTHGDSTYRYISAAEIAEAFQSFHVGQAVRTELVVPFGKGKSHPAALRTSKYGVSMKELLQANIDREILLMKRNSFLYIFQAIRLTVMAINTMTVFMRTNMHRDSIENGRIYMGAQFYGMLMIMFNGLAEMGLAIAKLPVFFKQRDLFFYPAWTYSLPSWILKTPISFLNTIVWVFLTYYVIGFDPNIERFFRQFLALFVMSEATSGLFRFIASLTRDPVVASTMGSSCILISMLSSGFILSREEIKKWWIWGYWISPLMYALNTLAVNEFLGNSWNKTISGFSEPLGRLVLESRGFFPEAKWYWIGVGALLGYVILLNVLYTICLIFLTCTVDVNNDEATSNHMIGNSSSGIKGMVLPFVPLSITFEDIKYSIDMPEALKTQATESRLELLKDISGSFRPGVLTALMGVSGAGKTTLLDVLAGRKTSGYIEGNITISGYPKKQETFARVSGYCEQNDIHSPNVTIYESLMFSAWLRLPTKIDSATRKMIIEEVMELVELYPLKDALVGLPGVSGLSIEQRKRLTIAVELVANPSIIFLDEPTSGLDARAAAIVMRAIRNTVDTGRTVVCTIHQPSIDIFESFDELFLMKRGGEEIYVGPLGQHSCELIRYFEAIEGVSKIKHGYNPSTWMLEVTSPMQEQKTGVNFTQVYKNSELYRRNKNLIKELSTPHESSSDLSFPTQYSQPFLTQCLACLWKQRLSYWRNPRYIAVKYFFTIIVALLFGTMFWGIGQKRNNKQALFSAMGSMYSTCLTMGVQNSASVQPIVSIERTVFYRERASHMYSPLPYALGQVAIELPYIFLQTIIYGMLVYAMIGYEWSGAKFFWYLFFMYFTLSYYTFYGMMAVGLTPNYNMSTVVSTGFYTMWNLFSGFLIPLTRIPIWWRWYYWICPVAWTLNGLVTSQFGDVSDKFDDGERVSDFVKNYFGFHHELLWVPAMVVVSFAVLFAFLFGLSLRLFNFQKR</sequence>
<comment type="function">
    <text evidence="1">May be a general defense protein.</text>
</comment>
<comment type="subcellular location">
    <subcellularLocation>
        <location evidence="2">Membrane</location>
        <topology evidence="2">Multi-pass membrane protein</topology>
    </subcellularLocation>
</comment>
<comment type="similarity">
    <text evidence="6">Belongs to the ABC transporter superfamily. ABCG family. PDR (TC 3.A.1.205) subfamily.</text>
</comment>
<comment type="sequence caution" evidence="6">
    <conflict type="erroneous gene model prediction">
        <sequence resource="EMBL-CDS" id="BAD29210"/>
    </conflict>
</comment>
<proteinExistence type="inferred from homology"/>
<evidence type="ECO:0000250" key="1"/>
<evidence type="ECO:0000255" key="2"/>
<evidence type="ECO:0000255" key="3">
    <source>
        <dbReference type="PROSITE-ProRule" id="PRU00434"/>
    </source>
</evidence>
<evidence type="ECO:0000303" key="4">
    <source>
    </source>
</evidence>
<evidence type="ECO:0000303" key="5">
    <source>
    </source>
</evidence>
<evidence type="ECO:0000305" key="6"/>
<evidence type="ECO:0000312" key="7">
    <source>
        <dbReference type="EMBL" id="BAD29210.1"/>
    </source>
</evidence>
<accession>Q6EQ60</accession>
<protein>
    <recommendedName>
        <fullName evidence="5">ABC transporter G family member 47</fullName>
        <shortName evidence="5">OsABCG47</shortName>
    </recommendedName>
    <alternativeName>
        <fullName evidence="4">Pleiotropic drug resistance protein 19</fullName>
        <shortName evidence="4">OsPDR19</shortName>
    </alternativeName>
</protein>
<dbReference type="EMBL" id="AP005724">
    <property type="protein sequence ID" value="BAD29210.1"/>
    <property type="status" value="ALT_SEQ"/>
    <property type="molecule type" value="Genomic_DNA"/>
</dbReference>
<dbReference type="EMBL" id="AP008215">
    <property type="status" value="NOT_ANNOTATED_CDS"/>
    <property type="molecule type" value="Genomic_DNA"/>
</dbReference>
<dbReference type="EMBL" id="AP014965">
    <property type="status" value="NOT_ANNOTATED_CDS"/>
    <property type="molecule type" value="Genomic_DNA"/>
</dbReference>
<dbReference type="SMR" id="Q6EQ60"/>
<dbReference type="FunCoup" id="Q6EQ60">
    <property type="interactions" value="61"/>
</dbReference>
<dbReference type="STRING" id="39947.Q6EQ60"/>
<dbReference type="iPTMnet" id="Q6EQ60"/>
<dbReference type="PaxDb" id="39947-Q6EQ60"/>
<dbReference type="eggNOG" id="KOG0065">
    <property type="taxonomic scope" value="Eukaryota"/>
</dbReference>
<dbReference type="InParanoid" id="Q6EQ60"/>
<dbReference type="Proteomes" id="UP000000763">
    <property type="component" value="Chromosome 9"/>
</dbReference>
<dbReference type="Proteomes" id="UP000059680">
    <property type="component" value="Chromosome 9"/>
</dbReference>
<dbReference type="GO" id="GO:0016020">
    <property type="term" value="C:membrane"/>
    <property type="evidence" value="ECO:0007669"/>
    <property type="project" value="UniProtKB-SubCell"/>
</dbReference>
<dbReference type="GO" id="GO:0140359">
    <property type="term" value="F:ABC-type transporter activity"/>
    <property type="evidence" value="ECO:0007669"/>
    <property type="project" value="InterPro"/>
</dbReference>
<dbReference type="GO" id="GO:0005524">
    <property type="term" value="F:ATP binding"/>
    <property type="evidence" value="ECO:0007669"/>
    <property type="project" value="UniProtKB-KW"/>
</dbReference>
<dbReference type="GO" id="GO:0016887">
    <property type="term" value="F:ATP hydrolysis activity"/>
    <property type="evidence" value="ECO:0007669"/>
    <property type="project" value="InterPro"/>
</dbReference>
<dbReference type="CDD" id="cd03233">
    <property type="entry name" value="ABCG_PDR_domain1"/>
    <property type="match status" value="1"/>
</dbReference>
<dbReference type="CDD" id="cd03232">
    <property type="entry name" value="ABCG_PDR_domain2"/>
    <property type="match status" value="1"/>
</dbReference>
<dbReference type="FunFam" id="3.40.50.300:FF:000532">
    <property type="entry name" value="ABC transporter G family member 34"/>
    <property type="match status" value="1"/>
</dbReference>
<dbReference type="FunFam" id="3.40.50.300:FF:000059">
    <property type="entry name" value="ABC transporter G family member 40"/>
    <property type="match status" value="1"/>
</dbReference>
<dbReference type="Gene3D" id="3.40.50.300">
    <property type="entry name" value="P-loop containing nucleotide triphosphate hydrolases"/>
    <property type="match status" value="2"/>
</dbReference>
<dbReference type="InterPro" id="IPR003593">
    <property type="entry name" value="AAA+_ATPase"/>
</dbReference>
<dbReference type="InterPro" id="IPR013525">
    <property type="entry name" value="ABC2_TM"/>
</dbReference>
<dbReference type="InterPro" id="IPR029481">
    <property type="entry name" value="ABC_trans_N"/>
</dbReference>
<dbReference type="InterPro" id="IPR003439">
    <property type="entry name" value="ABC_transporter-like_ATP-bd"/>
</dbReference>
<dbReference type="InterPro" id="IPR034001">
    <property type="entry name" value="ABCG_PDR_1"/>
</dbReference>
<dbReference type="InterPro" id="IPR034003">
    <property type="entry name" value="ABCG_PDR_2"/>
</dbReference>
<dbReference type="InterPro" id="IPR027417">
    <property type="entry name" value="P-loop_NTPase"/>
</dbReference>
<dbReference type="InterPro" id="IPR013581">
    <property type="entry name" value="PDR_assoc"/>
</dbReference>
<dbReference type="PANTHER" id="PTHR48040:SF35">
    <property type="entry name" value="ABC TRANSPORTER G FAMILY MEMBER 39-LIKE"/>
    <property type="match status" value="1"/>
</dbReference>
<dbReference type="PANTHER" id="PTHR48040">
    <property type="entry name" value="PLEIOTROPIC DRUG RESISTANCE PROTEIN 1-LIKE ISOFORM X1"/>
    <property type="match status" value="1"/>
</dbReference>
<dbReference type="Pfam" id="PF01061">
    <property type="entry name" value="ABC2_membrane"/>
    <property type="match status" value="2"/>
</dbReference>
<dbReference type="Pfam" id="PF00005">
    <property type="entry name" value="ABC_tran"/>
    <property type="match status" value="2"/>
</dbReference>
<dbReference type="Pfam" id="PF14510">
    <property type="entry name" value="ABC_trans_N"/>
    <property type="match status" value="1"/>
</dbReference>
<dbReference type="Pfam" id="PF08370">
    <property type="entry name" value="PDR_assoc"/>
    <property type="match status" value="1"/>
</dbReference>
<dbReference type="SMART" id="SM00382">
    <property type="entry name" value="AAA"/>
    <property type="match status" value="2"/>
</dbReference>
<dbReference type="SUPFAM" id="SSF52540">
    <property type="entry name" value="P-loop containing nucleoside triphosphate hydrolases"/>
    <property type="match status" value="2"/>
</dbReference>
<dbReference type="PROSITE" id="PS50893">
    <property type="entry name" value="ABC_TRANSPORTER_2"/>
    <property type="match status" value="2"/>
</dbReference>
<organism>
    <name type="scientific">Oryza sativa subsp. japonica</name>
    <name type="common">Rice</name>
    <dbReference type="NCBI Taxonomy" id="39947"/>
    <lineage>
        <taxon>Eukaryota</taxon>
        <taxon>Viridiplantae</taxon>
        <taxon>Streptophyta</taxon>
        <taxon>Embryophyta</taxon>
        <taxon>Tracheophyta</taxon>
        <taxon>Spermatophyta</taxon>
        <taxon>Magnoliopsida</taxon>
        <taxon>Liliopsida</taxon>
        <taxon>Poales</taxon>
        <taxon>Poaceae</taxon>
        <taxon>BOP clade</taxon>
        <taxon>Oryzoideae</taxon>
        <taxon>Oryzeae</taxon>
        <taxon>Oryzinae</taxon>
        <taxon>Oryza</taxon>
        <taxon>Oryza sativa</taxon>
    </lineage>
</organism>
<name>AB47G_ORYSJ</name>
<reference key="1">
    <citation type="journal article" date="2005" name="Nature">
        <title>The map-based sequence of the rice genome.</title>
        <authorList>
            <consortium name="International rice genome sequencing project (IRGSP)"/>
        </authorList>
    </citation>
    <scope>NUCLEOTIDE SEQUENCE [LARGE SCALE GENOMIC DNA]</scope>
    <source>
        <strain>cv. Nipponbare</strain>
    </source>
</reference>
<reference key="2">
    <citation type="journal article" date="2008" name="Nucleic Acids Res.">
        <title>The rice annotation project database (RAP-DB): 2008 update.</title>
        <authorList>
            <consortium name="The rice annotation project (RAP)"/>
        </authorList>
    </citation>
    <scope>GENOME REANNOTATION</scope>
    <source>
        <strain>cv. Nipponbare</strain>
    </source>
</reference>
<reference key="3">
    <citation type="journal article" date="2013" name="Rice">
        <title>Improvement of the Oryza sativa Nipponbare reference genome using next generation sequence and optical map data.</title>
        <authorList>
            <person name="Kawahara Y."/>
            <person name="de la Bastide M."/>
            <person name="Hamilton J.P."/>
            <person name="Kanamori H."/>
            <person name="McCombie W.R."/>
            <person name="Ouyang S."/>
            <person name="Schwartz D.C."/>
            <person name="Tanaka T."/>
            <person name="Wu J."/>
            <person name="Zhou S."/>
            <person name="Childs K.L."/>
            <person name="Davidson R.M."/>
            <person name="Lin H."/>
            <person name="Quesada-Ocampo L."/>
            <person name="Vaillancourt B."/>
            <person name="Sakai H."/>
            <person name="Lee S.S."/>
            <person name="Kim J."/>
            <person name="Numa H."/>
            <person name="Itoh T."/>
            <person name="Buell C.R."/>
            <person name="Matsumoto T."/>
        </authorList>
    </citation>
    <scope>GENOME REANNOTATION</scope>
    <source>
        <strain>cv. Nipponbare</strain>
    </source>
</reference>
<reference key="4">
    <citation type="journal article" date="2006" name="FEBS Lett.">
        <title>Organization and function of the plant pleiotropic drug resistance ABC transporter family.</title>
        <authorList>
            <person name="Crouzet J."/>
            <person name="Trombik T."/>
            <person name="Fraysse A.S."/>
            <person name="Boutry M."/>
        </authorList>
    </citation>
    <scope>GENE FAMILY</scope>
    <scope>NOMENCLATURE</scope>
</reference>
<reference key="5">
    <citation type="journal article" date="2008" name="Trends Plant Sci.">
        <title>Plant ABC proteins - a unified nomenclature and updated inventory.</title>
        <authorList>
            <person name="Verrier P.J."/>
            <person name="Bird D."/>
            <person name="Burla B."/>
            <person name="Dassa E."/>
            <person name="Forestier C."/>
            <person name="Geisler M."/>
            <person name="Klein M."/>
            <person name="Kolukisaoglu H.U."/>
            <person name="Lee Y."/>
            <person name="Martinoia E."/>
            <person name="Murphy A."/>
            <person name="Rea P.A."/>
            <person name="Samuels L."/>
            <person name="Schulz B."/>
            <person name="Spalding E.J."/>
            <person name="Yazaki K."/>
            <person name="Theodoulou F.L."/>
        </authorList>
    </citation>
    <scope>GENE FAMILY</scope>
    <scope>NOMENCLATURE</scope>
</reference>
<feature type="chain" id="PRO_0000433457" description="ABC transporter G family member 47">
    <location>
        <begin position="1"/>
        <end position="1404"/>
    </location>
</feature>
<feature type="transmembrane region" description="Helical" evidence="2">
    <location>
        <begin position="519"/>
        <end position="539"/>
    </location>
</feature>
<feature type="transmembrane region" description="Helical" evidence="2">
    <location>
        <begin position="565"/>
        <end position="585"/>
    </location>
</feature>
<feature type="transmembrane region" description="Helical" evidence="2">
    <location>
        <begin position="607"/>
        <end position="627"/>
    </location>
</feature>
<feature type="transmembrane region" description="Helical" evidence="2">
    <location>
        <begin position="638"/>
        <end position="658"/>
    </location>
</feature>
<feature type="transmembrane region" description="Helical" evidence="2">
    <location>
        <begin position="663"/>
        <end position="683"/>
    </location>
</feature>
<feature type="transmembrane region" description="Helical" evidence="2">
    <location>
        <begin position="692"/>
        <end position="712"/>
    </location>
</feature>
<feature type="transmembrane region" description="Helical" evidence="2">
    <location>
        <begin position="751"/>
        <end position="771"/>
    </location>
</feature>
<feature type="transmembrane region" description="Helical" evidence="2">
    <location>
        <begin position="1152"/>
        <end position="1172"/>
    </location>
</feature>
<feature type="transmembrane region" description="Helical" evidence="6">
    <location>
        <begin position="1183"/>
        <end position="1199"/>
    </location>
</feature>
<feature type="transmembrane region" description="Helical" evidence="2">
    <location>
        <begin position="1239"/>
        <end position="1259"/>
    </location>
</feature>
<feature type="transmembrane region" description="Helical" evidence="2">
    <location>
        <begin position="1266"/>
        <end position="1286"/>
    </location>
</feature>
<feature type="transmembrane region" description="Helical" evidence="2">
    <location>
        <begin position="1298"/>
        <end position="1318"/>
    </location>
</feature>
<feature type="transmembrane region" description="Helical" evidence="2">
    <location>
        <begin position="1321"/>
        <end position="1341"/>
    </location>
</feature>
<feature type="transmembrane region" description="Helical" evidence="2">
    <location>
        <begin position="1373"/>
        <end position="1393"/>
    </location>
</feature>
<feature type="domain" description="ABC transporter 1" evidence="3">
    <location>
        <begin position="156"/>
        <end position="423"/>
    </location>
</feature>
<feature type="domain" description="ABC transmembrane type-2 1" evidence="6">
    <location>
        <begin position="501"/>
        <end position="714"/>
    </location>
</feature>
<feature type="domain" description="ABC transporter 2" evidence="3">
    <location>
        <begin position="808"/>
        <end position="1059"/>
    </location>
</feature>
<feature type="domain" description="ABC transmembrane type-2 2" evidence="6">
    <location>
        <begin position="1132"/>
        <end position="1346"/>
    </location>
</feature>
<feature type="binding site" evidence="3">
    <location>
        <begin position="189"/>
        <end position="196"/>
    </location>
    <ligand>
        <name>ATP</name>
        <dbReference type="ChEBI" id="CHEBI:30616"/>
        <label>1</label>
    </ligand>
</feature>
<feature type="binding site" evidence="3">
    <location>
        <begin position="852"/>
        <end position="859"/>
    </location>
    <ligand>
        <name>ATP</name>
        <dbReference type="ChEBI" id="CHEBI:30616"/>
        <label>2</label>
    </ligand>
</feature>
<keyword id="KW-0067">ATP-binding</keyword>
<keyword id="KW-0472">Membrane</keyword>
<keyword id="KW-0547">Nucleotide-binding</keyword>
<keyword id="KW-1185">Reference proteome</keyword>
<keyword id="KW-0677">Repeat</keyword>
<keyword id="KW-0812">Transmembrane</keyword>
<keyword id="KW-1133">Transmembrane helix</keyword>
<keyword id="KW-0813">Transport</keyword>